<evidence type="ECO:0000255" key="1">
    <source>
        <dbReference type="HAMAP-Rule" id="MF_00657"/>
    </source>
</evidence>
<proteinExistence type="inferred from homology"/>
<sequence>MMLHIPGVLTKAQVAQCREMLDTADWVDGNATSGAQSALAKRNRQLPEGSPVARTVGDAIQDALARHPLFFSAALPLKVFPPLFNRYEGGETFGTHVDNAIRLLRGTDFRVRSDLSATLFLEEPDAYDGGELCVEDTYGVHRAKLPAGDLVLYPASSLHHVTPVTRGERVASFFWIQSMVRDDGDRTLLFQLDTQIQALSAEKGAKDPVVISLTGIYHNLLRKWADA</sequence>
<feature type="chain" id="PRO_1000061711" description="PKHD-type hydroxylase Bcen2424_4810">
    <location>
        <begin position="1"/>
        <end position="227"/>
    </location>
</feature>
<feature type="domain" description="Fe2OG dioxygenase" evidence="1">
    <location>
        <begin position="78"/>
        <end position="178"/>
    </location>
</feature>
<feature type="binding site" evidence="1">
    <location>
        <position position="96"/>
    </location>
    <ligand>
        <name>Fe cation</name>
        <dbReference type="ChEBI" id="CHEBI:24875"/>
    </ligand>
</feature>
<feature type="binding site" evidence="1">
    <location>
        <position position="98"/>
    </location>
    <ligand>
        <name>Fe cation</name>
        <dbReference type="ChEBI" id="CHEBI:24875"/>
    </ligand>
</feature>
<feature type="binding site" evidence="1">
    <location>
        <position position="159"/>
    </location>
    <ligand>
        <name>Fe cation</name>
        <dbReference type="ChEBI" id="CHEBI:24875"/>
    </ligand>
</feature>
<feature type="binding site" evidence="1">
    <location>
        <position position="169"/>
    </location>
    <ligand>
        <name>2-oxoglutarate</name>
        <dbReference type="ChEBI" id="CHEBI:16810"/>
    </ligand>
</feature>
<reference key="1">
    <citation type="submission" date="2006-08" db="EMBL/GenBank/DDBJ databases">
        <title>Complete sequence of chromosome 2 of Burkholderia cenocepacia HI2424.</title>
        <authorList>
            <person name="Copeland A."/>
            <person name="Lucas S."/>
            <person name="Lapidus A."/>
            <person name="Barry K."/>
            <person name="Detter J.C."/>
            <person name="Glavina del Rio T."/>
            <person name="Hammon N."/>
            <person name="Israni S."/>
            <person name="Pitluck S."/>
            <person name="Chain P."/>
            <person name="Malfatti S."/>
            <person name="Shin M."/>
            <person name="Vergez L."/>
            <person name="Schmutz J."/>
            <person name="Larimer F."/>
            <person name="Land M."/>
            <person name="Hauser L."/>
            <person name="Kyrpides N."/>
            <person name="Kim E."/>
            <person name="LiPuma J.J."/>
            <person name="Gonzalez C.F."/>
            <person name="Konstantinidis K."/>
            <person name="Tiedje J.M."/>
            <person name="Richardson P."/>
        </authorList>
    </citation>
    <scope>NUCLEOTIDE SEQUENCE [LARGE SCALE GENOMIC DNA]</scope>
    <source>
        <strain>HI2424</strain>
    </source>
</reference>
<name>Y4810_BURCH</name>
<organism>
    <name type="scientific">Burkholderia cenocepacia (strain HI2424)</name>
    <dbReference type="NCBI Taxonomy" id="331272"/>
    <lineage>
        <taxon>Bacteria</taxon>
        <taxon>Pseudomonadati</taxon>
        <taxon>Pseudomonadota</taxon>
        <taxon>Betaproteobacteria</taxon>
        <taxon>Burkholderiales</taxon>
        <taxon>Burkholderiaceae</taxon>
        <taxon>Burkholderia</taxon>
        <taxon>Burkholderia cepacia complex</taxon>
    </lineage>
</organism>
<gene>
    <name type="ordered locus">Bcen2424_4810</name>
</gene>
<protein>
    <recommendedName>
        <fullName evidence="1">PKHD-type hydroxylase Bcen2424_4810</fullName>
        <ecNumber evidence="1">1.14.11.-</ecNumber>
    </recommendedName>
</protein>
<comment type="cofactor">
    <cofactor evidence="1">
        <name>Fe(2+)</name>
        <dbReference type="ChEBI" id="CHEBI:29033"/>
    </cofactor>
    <text evidence="1">Binds 1 Fe(2+) ion per subunit.</text>
</comment>
<comment type="cofactor">
    <cofactor evidence="1">
        <name>L-ascorbate</name>
        <dbReference type="ChEBI" id="CHEBI:38290"/>
    </cofactor>
</comment>
<accession>A0B1L8</accession>
<dbReference type="EC" id="1.14.11.-" evidence="1"/>
<dbReference type="EMBL" id="CP000459">
    <property type="protein sequence ID" value="ABK11544.1"/>
    <property type="molecule type" value="Genomic_DNA"/>
</dbReference>
<dbReference type="RefSeq" id="WP_011547334.1">
    <property type="nucleotide sequence ID" value="NC_008543.1"/>
</dbReference>
<dbReference type="SMR" id="A0B1L8"/>
<dbReference type="KEGG" id="bch:Bcen2424_4810"/>
<dbReference type="HOGENOM" id="CLU_106663_0_0_4"/>
<dbReference type="GO" id="GO:0016706">
    <property type="term" value="F:2-oxoglutarate-dependent dioxygenase activity"/>
    <property type="evidence" value="ECO:0007669"/>
    <property type="project" value="UniProtKB-UniRule"/>
</dbReference>
<dbReference type="GO" id="GO:0005506">
    <property type="term" value="F:iron ion binding"/>
    <property type="evidence" value="ECO:0007669"/>
    <property type="project" value="UniProtKB-UniRule"/>
</dbReference>
<dbReference type="GO" id="GO:0031418">
    <property type="term" value="F:L-ascorbic acid binding"/>
    <property type="evidence" value="ECO:0007669"/>
    <property type="project" value="UniProtKB-KW"/>
</dbReference>
<dbReference type="GO" id="GO:0006974">
    <property type="term" value="P:DNA damage response"/>
    <property type="evidence" value="ECO:0007669"/>
    <property type="project" value="TreeGrafter"/>
</dbReference>
<dbReference type="GO" id="GO:0006879">
    <property type="term" value="P:intracellular iron ion homeostasis"/>
    <property type="evidence" value="ECO:0007669"/>
    <property type="project" value="TreeGrafter"/>
</dbReference>
<dbReference type="Gene3D" id="2.60.120.620">
    <property type="entry name" value="q2cbj1_9rhob like domain"/>
    <property type="match status" value="1"/>
</dbReference>
<dbReference type="Gene3D" id="4.10.860.20">
    <property type="entry name" value="Rabenosyn, Rab binding domain"/>
    <property type="match status" value="1"/>
</dbReference>
<dbReference type="HAMAP" id="MF_00657">
    <property type="entry name" value="Hydroxyl_YbiX"/>
    <property type="match status" value="1"/>
</dbReference>
<dbReference type="InterPro" id="IPR005123">
    <property type="entry name" value="Oxoglu/Fe-dep_dioxygenase_dom"/>
</dbReference>
<dbReference type="InterPro" id="IPR041097">
    <property type="entry name" value="PKHD_C"/>
</dbReference>
<dbReference type="InterPro" id="IPR023550">
    <property type="entry name" value="PKHD_hydroxylase"/>
</dbReference>
<dbReference type="InterPro" id="IPR006620">
    <property type="entry name" value="Pro_4_hyd_alph"/>
</dbReference>
<dbReference type="InterPro" id="IPR044862">
    <property type="entry name" value="Pro_4_hyd_alph_FE2OG_OXY"/>
</dbReference>
<dbReference type="NCBIfam" id="NF003973">
    <property type="entry name" value="PRK05467.1-2"/>
    <property type="match status" value="1"/>
</dbReference>
<dbReference type="NCBIfam" id="NF003974">
    <property type="entry name" value="PRK05467.1-3"/>
    <property type="match status" value="1"/>
</dbReference>
<dbReference type="NCBIfam" id="NF003975">
    <property type="entry name" value="PRK05467.1-4"/>
    <property type="match status" value="1"/>
</dbReference>
<dbReference type="PANTHER" id="PTHR41536">
    <property type="entry name" value="PKHD-TYPE HYDROXYLASE YBIX"/>
    <property type="match status" value="1"/>
</dbReference>
<dbReference type="PANTHER" id="PTHR41536:SF1">
    <property type="entry name" value="PKHD-TYPE HYDROXYLASE YBIX"/>
    <property type="match status" value="1"/>
</dbReference>
<dbReference type="Pfam" id="PF13640">
    <property type="entry name" value="2OG-FeII_Oxy_3"/>
    <property type="match status" value="1"/>
</dbReference>
<dbReference type="Pfam" id="PF18331">
    <property type="entry name" value="PKHD_C"/>
    <property type="match status" value="1"/>
</dbReference>
<dbReference type="SMART" id="SM00702">
    <property type="entry name" value="P4Hc"/>
    <property type="match status" value="1"/>
</dbReference>
<dbReference type="PROSITE" id="PS51471">
    <property type="entry name" value="FE2OG_OXY"/>
    <property type="match status" value="1"/>
</dbReference>
<keyword id="KW-0223">Dioxygenase</keyword>
<keyword id="KW-0408">Iron</keyword>
<keyword id="KW-0479">Metal-binding</keyword>
<keyword id="KW-0560">Oxidoreductase</keyword>
<keyword id="KW-0847">Vitamin C</keyword>